<reference key="1">
    <citation type="submission" date="2004-01" db="EMBL/GenBank/DDBJ databases">
        <title>Characterization of the receptor tyrosine kinase Met and its ligand HGF on canine osteosarcoma cell line.</title>
        <authorList>
            <person name="Liao A.T."/>
            <person name="Chien M.B."/>
            <person name="London C.A."/>
        </authorList>
    </citation>
    <scope>NUCLEOTIDE SEQUENCE [MRNA]</scope>
</reference>
<feature type="signal peptide" evidence="1">
    <location>
        <begin position="1"/>
        <end position="33"/>
    </location>
</feature>
<feature type="propeptide" id="PRO_0000041840" description="Removed in mature form" evidence="1">
    <location>
        <begin position="34"/>
        <end position="370"/>
    </location>
</feature>
<feature type="chain" id="PRO_0000041841" description="Hepatocyte growth factor activator short chain" evidence="1">
    <location>
        <begin position="371"/>
        <end position="406"/>
    </location>
</feature>
<feature type="chain" id="PRO_0000041842" description="Hepatocyte growth factor activator long chain" evidence="1">
    <location>
        <begin position="407"/>
        <end position="654"/>
    </location>
</feature>
<feature type="domain" description="Fibronectin type-II" evidence="6 7">
    <location>
        <begin position="101"/>
        <end position="148"/>
    </location>
</feature>
<feature type="domain" description="EGF-like 1" evidence="3">
    <location>
        <begin position="158"/>
        <end position="196"/>
    </location>
</feature>
<feature type="domain" description="Fibronectin type-I" evidence="6">
    <location>
        <begin position="198"/>
        <end position="238"/>
    </location>
</feature>
<feature type="domain" description="EGF-like 2" evidence="3">
    <location>
        <begin position="239"/>
        <end position="277"/>
    </location>
</feature>
<feature type="domain" description="Kringle" evidence="4">
    <location>
        <begin position="283"/>
        <end position="365"/>
    </location>
</feature>
<feature type="domain" description="Peptidase S1" evidence="5">
    <location>
        <begin position="407"/>
        <end position="645"/>
    </location>
</feature>
<feature type="region of interest" description="Disordered" evidence="8">
    <location>
        <begin position="34"/>
        <end position="100"/>
    </location>
</feature>
<feature type="compositionally biased region" description="Low complexity" evidence="8">
    <location>
        <begin position="57"/>
        <end position="81"/>
    </location>
</feature>
<feature type="active site" description="Charge relay system" evidence="1 5">
    <location>
        <position position="446"/>
    </location>
</feature>
<feature type="active site" description="Charge relay system" evidence="1 5">
    <location>
        <position position="496"/>
    </location>
</feature>
<feature type="active site" description="Charge relay system" evidence="1 5">
    <location>
        <position position="597"/>
    </location>
</feature>
<feature type="site" description="Cleavage" evidence="1">
    <location>
        <begin position="370"/>
        <end position="371"/>
    </location>
</feature>
<feature type="site" description="Cleavage" evidence="1">
    <location>
        <begin position="406"/>
        <end position="407"/>
    </location>
</feature>
<feature type="glycosylation site" description="N-linked (GlcNAc...) asparagine" evidence="2">
    <location>
        <position position="38"/>
    </location>
</feature>
<feature type="glycosylation site" description="N-linked (GlcNAc...) asparagine" evidence="2">
    <location>
        <position position="46"/>
    </location>
</feature>
<feature type="glycosylation site" description="N-linked (GlcNAc...) asparagine" evidence="2">
    <location>
        <position position="288"/>
    </location>
</feature>
<feature type="glycosylation site" description="N-linked (GlcNAc...) asparagine" evidence="2">
    <location>
        <position position="467"/>
    </location>
</feature>
<feature type="glycosylation site" description="N-linked (GlcNAc...) asparagine" evidence="2">
    <location>
        <position position="491"/>
    </location>
</feature>
<feature type="glycosylation site" description="N-linked (GlcNAc...) asparagine" evidence="2">
    <location>
        <position position="545"/>
    </location>
</feature>
<feature type="disulfide bond" evidence="7">
    <location>
        <begin position="106"/>
        <end position="131"/>
    </location>
</feature>
<feature type="disulfide bond" evidence="7">
    <location>
        <begin position="120"/>
        <end position="146"/>
    </location>
</feature>
<feature type="disulfide bond" evidence="3">
    <location>
        <begin position="162"/>
        <end position="173"/>
    </location>
</feature>
<feature type="disulfide bond" evidence="3">
    <location>
        <begin position="167"/>
        <end position="184"/>
    </location>
</feature>
<feature type="disulfide bond" evidence="3">
    <location>
        <begin position="186"/>
        <end position="195"/>
    </location>
</feature>
<feature type="disulfide bond" evidence="6">
    <location>
        <begin position="200"/>
        <end position="228"/>
    </location>
</feature>
<feature type="disulfide bond" evidence="6">
    <location>
        <begin position="226"/>
        <end position="235"/>
    </location>
</feature>
<feature type="disulfide bond" evidence="3">
    <location>
        <begin position="243"/>
        <end position="254"/>
    </location>
</feature>
<feature type="disulfide bond" evidence="3">
    <location>
        <begin position="248"/>
        <end position="265"/>
    </location>
</feature>
<feature type="disulfide bond" evidence="3">
    <location>
        <begin position="267"/>
        <end position="276"/>
    </location>
</feature>
<feature type="disulfide bond" evidence="4">
    <location>
        <begin position="284"/>
        <end position="365"/>
    </location>
</feature>
<feature type="disulfide bond" evidence="4">
    <location>
        <begin position="305"/>
        <end position="347"/>
    </location>
</feature>
<feature type="disulfide bond" evidence="4">
    <location>
        <begin position="336"/>
        <end position="360"/>
    </location>
</feature>
<feature type="disulfide bond" evidence="1 4">
    <location>
        <begin position="393"/>
        <end position="520"/>
    </location>
</feature>
<feature type="disulfide bond" description="Interchain (with C-521)" evidence="1">
    <location>
        <position position="393"/>
    </location>
</feature>
<feature type="disulfide bond" evidence="1 4">
    <location>
        <begin position="431"/>
        <end position="447"/>
    </location>
</feature>
<feature type="disulfide bond" evidence="1 4">
    <location>
        <begin position="439"/>
        <end position="509"/>
    </location>
</feature>
<feature type="disulfide bond" description="Interchain (with C-394)" evidence="1 4">
    <location>
        <position position="520"/>
    </location>
</feature>
<feature type="disulfide bond" evidence="1 4">
    <location>
        <begin position="534"/>
        <end position="603"/>
    </location>
</feature>
<feature type="disulfide bond" evidence="1 4">
    <location>
        <begin position="566"/>
        <end position="582"/>
    </location>
</feature>
<feature type="disulfide bond" evidence="1 4">
    <location>
        <begin position="593"/>
        <end position="621"/>
    </location>
</feature>
<evidence type="ECO:0000250" key="1">
    <source>
        <dbReference type="UniProtKB" id="Q04756"/>
    </source>
</evidence>
<evidence type="ECO:0000255" key="2"/>
<evidence type="ECO:0000255" key="3">
    <source>
        <dbReference type="PROSITE-ProRule" id="PRU00076"/>
    </source>
</evidence>
<evidence type="ECO:0000255" key="4">
    <source>
        <dbReference type="PROSITE-ProRule" id="PRU00121"/>
    </source>
</evidence>
<evidence type="ECO:0000255" key="5">
    <source>
        <dbReference type="PROSITE-ProRule" id="PRU00274"/>
    </source>
</evidence>
<evidence type="ECO:0000255" key="6">
    <source>
        <dbReference type="PROSITE-ProRule" id="PRU00478"/>
    </source>
</evidence>
<evidence type="ECO:0000255" key="7">
    <source>
        <dbReference type="PROSITE-ProRule" id="PRU00479"/>
    </source>
</evidence>
<evidence type="ECO:0000256" key="8">
    <source>
        <dbReference type="SAM" id="MobiDB-lite"/>
    </source>
</evidence>
<name>HGFA_CANLF</name>
<proteinExistence type="evidence at transcript level"/>
<protein>
    <recommendedName>
        <fullName evidence="1">Hepatocyte growth factor activator serine proteases</fullName>
        <shortName>HGF activator</shortName>
        <shortName>HGFA</shortName>
        <shortName>HGFA serine protease</shortName>
        <ecNumber evidence="1">3.4.21.-</ecNumber>
    </recommendedName>
    <alternativeName>
        <fullName evidence="1">Serine protease HGFAC</fullName>
    </alternativeName>
    <component>
        <recommendedName>
            <fullName>Hepatocyte growth factor activator short chain</fullName>
        </recommendedName>
    </component>
    <component>
        <recommendedName>
            <fullName>Hepatocyte growth factor activator long chain</fullName>
        </recommendedName>
    </component>
</protein>
<comment type="function">
    <text evidence="1">Serine protease that hydrolyzes the inactive zymogen hepatocyte growth factor (HGFsc) to an activated disulfide-linked heterodimer, then initiating hepatocyte growth factor receptor signaling pathway.</text>
</comment>
<comment type="subunit">
    <text evidence="1">Heterodimer of a short chain and a long chain linked by a disulfide bond.</text>
</comment>
<comment type="subcellular location">
    <subcellularLocation>
        <location evidence="1">Secreted</location>
    </subcellularLocation>
    <text evidence="1">Exists as an inactive zymogen in plasma. Exists as an active heterodimeric form in serum.</text>
</comment>
<comment type="tissue specificity">
    <text>Liver.</text>
</comment>
<comment type="PTM">
    <text evidence="1">The active form of HGFAC presents in the serum is derived from the COOH-terminal region of the precursor by the cleavage of bonds between Arg-370 and Ile-371 and Arg-406 and Ile-407.</text>
</comment>
<comment type="similarity">
    <text evidence="5">Belongs to the peptidase S1 family.</text>
</comment>
<sequence>MGRWAWGPSLCPLPGMALLLLLLLLLVPHGAQPQAGGNLTEPPEPNATVTPGTPMIPVTSVTPVTPATSAPEAQGPRGRGLTPPPRAAPSSSSPGDPVLTVDGQPCRFPFRYGGRMLHACTSEGSAHRKWCATTHNYDRDRAWGYCVQAPVSREGPAALDSCASSPCLNGGSCSHTQDPGSYHCTCPMAFTGRNCDTEKCFDETRYEHLEAGDRWARVSQGQVEQCECAGGQIRCEGTRHTACLSSPCLNGGTCHLIVATGTTVCSCPPGHAGRLCNIVPSQRCFVGNGTEYRGVASTAASGLSCLAWNSDLLYQELHVDSVGAAALLGLGPHAYCRNPDKDERPWCYVVKDSALSWEYCRLAACESLARIPSLTTAVLLSQAEPAPVGRQTCGKRHKKRTFLRPRIIGGSSSLPGSHPWLAAIYIGDSFCAGSLVHTCWVVSAAHCFSNSPRRESVLVVLGQHFFNQTTDVTQTFGIEKYIPYPMYSVFNPSDHDLVLIRLKKKGDRCAIRSQFVQPICLPEPSSPFPAGHKCQIAGWGHQDENVSGYSSSLREALVPLVADHKCSSPEVYGADISPNMLCAGYFDCKSDACQGDSGGPLACEKNGVAYLYGIISWGDGCGRLNKPGVYTRVAKYVDWIKDRIWPSKRPSDPS</sequence>
<dbReference type="EC" id="3.4.21.-" evidence="1"/>
<dbReference type="EMBL" id="AY532633">
    <property type="protein sequence ID" value="AAS48370.1"/>
    <property type="molecule type" value="mRNA"/>
</dbReference>
<dbReference type="RefSeq" id="NP_001026985.1">
    <property type="nucleotide sequence ID" value="NM_001031815.2"/>
</dbReference>
<dbReference type="SMR" id="Q6QNF4"/>
<dbReference type="FunCoup" id="Q6QNF4">
    <property type="interactions" value="7"/>
</dbReference>
<dbReference type="STRING" id="9615.ENSCAFP00000021566"/>
<dbReference type="MEROPS" id="S01.228"/>
<dbReference type="GlyCosmos" id="Q6QNF4">
    <property type="glycosylation" value="5 sites, No reported glycans"/>
</dbReference>
<dbReference type="PaxDb" id="9612-ENSCAFP00000021566"/>
<dbReference type="GeneID" id="403432"/>
<dbReference type="KEGG" id="cfa:403432"/>
<dbReference type="CTD" id="3083"/>
<dbReference type="eggNOG" id="KOG1217">
    <property type="taxonomic scope" value="Eukaryota"/>
</dbReference>
<dbReference type="eggNOG" id="KOG3627">
    <property type="taxonomic scope" value="Eukaryota"/>
</dbReference>
<dbReference type="InParanoid" id="Q6QNF4"/>
<dbReference type="OrthoDB" id="9925451at2759"/>
<dbReference type="Proteomes" id="UP000002254">
    <property type="component" value="Unplaced"/>
</dbReference>
<dbReference type="Proteomes" id="UP000694429">
    <property type="component" value="Unplaced"/>
</dbReference>
<dbReference type="Proteomes" id="UP000694542">
    <property type="component" value="Unplaced"/>
</dbReference>
<dbReference type="Proteomes" id="UP000805418">
    <property type="component" value="Unplaced"/>
</dbReference>
<dbReference type="GO" id="GO:0005615">
    <property type="term" value="C:extracellular space"/>
    <property type="evidence" value="ECO:0000318"/>
    <property type="project" value="GO_Central"/>
</dbReference>
<dbReference type="GO" id="GO:0005791">
    <property type="term" value="C:rough endoplasmic reticulum"/>
    <property type="evidence" value="ECO:0000318"/>
    <property type="project" value="GO_Central"/>
</dbReference>
<dbReference type="GO" id="GO:0005509">
    <property type="term" value="F:calcium ion binding"/>
    <property type="evidence" value="ECO:0007669"/>
    <property type="project" value="InterPro"/>
</dbReference>
<dbReference type="GO" id="GO:0004252">
    <property type="term" value="F:serine-type endopeptidase activity"/>
    <property type="evidence" value="ECO:0000318"/>
    <property type="project" value="GO_Central"/>
</dbReference>
<dbReference type="GO" id="GO:0007596">
    <property type="term" value="P:blood coagulation"/>
    <property type="evidence" value="ECO:0000318"/>
    <property type="project" value="GO_Central"/>
</dbReference>
<dbReference type="GO" id="GO:0031638">
    <property type="term" value="P:zymogen activation"/>
    <property type="evidence" value="ECO:0000318"/>
    <property type="project" value="GO_Central"/>
</dbReference>
<dbReference type="CDD" id="cd00054">
    <property type="entry name" value="EGF_CA"/>
    <property type="match status" value="2"/>
</dbReference>
<dbReference type="CDD" id="cd00061">
    <property type="entry name" value="FN1"/>
    <property type="match status" value="1"/>
</dbReference>
<dbReference type="CDD" id="cd00062">
    <property type="entry name" value="FN2"/>
    <property type="match status" value="1"/>
</dbReference>
<dbReference type="CDD" id="cd00108">
    <property type="entry name" value="KR"/>
    <property type="match status" value="1"/>
</dbReference>
<dbReference type="CDD" id="cd00190">
    <property type="entry name" value="Tryp_SPc"/>
    <property type="match status" value="1"/>
</dbReference>
<dbReference type="FunFam" id="2.40.10.10:FF:000061">
    <property type="entry name" value="Hepatocyte growth factor activator"/>
    <property type="match status" value="1"/>
</dbReference>
<dbReference type="FunFam" id="2.10.10.10:FF:000007">
    <property type="entry name" value="hepatocyte growth factor activator"/>
    <property type="match status" value="1"/>
</dbReference>
<dbReference type="FunFam" id="2.10.25.10:FF:000338">
    <property type="entry name" value="hepatocyte growth factor activator"/>
    <property type="match status" value="1"/>
</dbReference>
<dbReference type="FunFam" id="2.10.25.10:FF:000057">
    <property type="entry name" value="protocadherin Fat 1 isoform X2"/>
    <property type="match status" value="1"/>
</dbReference>
<dbReference type="FunFam" id="2.40.20.10:FF:000001">
    <property type="entry name" value="Urokinase-type plasminogen activator"/>
    <property type="match status" value="1"/>
</dbReference>
<dbReference type="Gene3D" id="2.10.10.10">
    <property type="entry name" value="Fibronectin, type II, collagen-binding"/>
    <property type="match status" value="1"/>
</dbReference>
<dbReference type="Gene3D" id="2.10.25.10">
    <property type="entry name" value="Laminin"/>
    <property type="match status" value="2"/>
</dbReference>
<dbReference type="Gene3D" id="2.40.20.10">
    <property type="entry name" value="Plasminogen Kringle 4"/>
    <property type="match status" value="1"/>
</dbReference>
<dbReference type="Gene3D" id="2.40.10.10">
    <property type="entry name" value="Trypsin-like serine proteases"/>
    <property type="match status" value="1"/>
</dbReference>
<dbReference type="InterPro" id="IPR014394">
    <property type="entry name" value="Coagulation_fac_XII/HGFA"/>
</dbReference>
<dbReference type="InterPro" id="IPR001881">
    <property type="entry name" value="EGF-like_Ca-bd_dom"/>
</dbReference>
<dbReference type="InterPro" id="IPR000742">
    <property type="entry name" value="EGF-like_dom"/>
</dbReference>
<dbReference type="InterPro" id="IPR000083">
    <property type="entry name" value="Fibronectin_type1"/>
</dbReference>
<dbReference type="InterPro" id="IPR000562">
    <property type="entry name" value="FN_type2_dom"/>
</dbReference>
<dbReference type="InterPro" id="IPR036943">
    <property type="entry name" value="FN_type2_sf"/>
</dbReference>
<dbReference type="InterPro" id="IPR000001">
    <property type="entry name" value="Kringle"/>
</dbReference>
<dbReference type="InterPro" id="IPR013806">
    <property type="entry name" value="Kringle-like"/>
</dbReference>
<dbReference type="InterPro" id="IPR018056">
    <property type="entry name" value="Kringle_CS"/>
</dbReference>
<dbReference type="InterPro" id="IPR038178">
    <property type="entry name" value="Kringle_sf"/>
</dbReference>
<dbReference type="InterPro" id="IPR009003">
    <property type="entry name" value="Peptidase_S1_PA"/>
</dbReference>
<dbReference type="InterPro" id="IPR043504">
    <property type="entry name" value="Peptidase_S1_PA_chymotrypsin"/>
</dbReference>
<dbReference type="InterPro" id="IPR001314">
    <property type="entry name" value="Peptidase_S1A"/>
</dbReference>
<dbReference type="InterPro" id="IPR050127">
    <property type="entry name" value="Serine_Proteases_S1"/>
</dbReference>
<dbReference type="InterPro" id="IPR001254">
    <property type="entry name" value="Trypsin_dom"/>
</dbReference>
<dbReference type="InterPro" id="IPR018114">
    <property type="entry name" value="TRYPSIN_HIS"/>
</dbReference>
<dbReference type="InterPro" id="IPR033116">
    <property type="entry name" value="TRYPSIN_SER"/>
</dbReference>
<dbReference type="PANTHER" id="PTHR24264:SF43">
    <property type="entry name" value="HEPATOCYTE GROWTH FACTOR ACTIVATOR"/>
    <property type="match status" value="1"/>
</dbReference>
<dbReference type="PANTHER" id="PTHR24264">
    <property type="entry name" value="TRYPSIN-RELATED"/>
    <property type="match status" value="1"/>
</dbReference>
<dbReference type="Pfam" id="PF00008">
    <property type="entry name" value="EGF"/>
    <property type="match status" value="2"/>
</dbReference>
<dbReference type="Pfam" id="PF00039">
    <property type="entry name" value="fn1"/>
    <property type="match status" value="1"/>
</dbReference>
<dbReference type="Pfam" id="PF00040">
    <property type="entry name" value="fn2"/>
    <property type="match status" value="1"/>
</dbReference>
<dbReference type="Pfam" id="PF00051">
    <property type="entry name" value="Kringle"/>
    <property type="match status" value="1"/>
</dbReference>
<dbReference type="Pfam" id="PF00089">
    <property type="entry name" value="Trypsin"/>
    <property type="match status" value="1"/>
</dbReference>
<dbReference type="PIRSF" id="PIRSF001146">
    <property type="entry name" value="Factor_XII_HGFA"/>
    <property type="match status" value="1"/>
</dbReference>
<dbReference type="PRINTS" id="PR00722">
    <property type="entry name" value="CHYMOTRYPSIN"/>
</dbReference>
<dbReference type="PRINTS" id="PR00013">
    <property type="entry name" value="FNTYPEII"/>
</dbReference>
<dbReference type="PRINTS" id="PR00018">
    <property type="entry name" value="KRINGLE"/>
</dbReference>
<dbReference type="SMART" id="SM00181">
    <property type="entry name" value="EGF"/>
    <property type="match status" value="2"/>
</dbReference>
<dbReference type="SMART" id="SM00179">
    <property type="entry name" value="EGF_CA"/>
    <property type="match status" value="1"/>
</dbReference>
<dbReference type="SMART" id="SM00058">
    <property type="entry name" value="FN1"/>
    <property type="match status" value="1"/>
</dbReference>
<dbReference type="SMART" id="SM00059">
    <property type="entry name" value="FN2"/>
    <property type="match status" value="1"/>
</dbReference>
<dbReference type="SMART" id="SM00130">
    <property type="entry name" value="KR"/>
    <property type="match status" value="1"/>
</dbReference>
<dbReference type="SMART" id="SM00020">
    <property type="entry name" value="Tryp_SPc"/>
    <property type="match status" value="1"/>
</dbReference>
<dbReference type="SUPFAM" id="SSF57196">
    <property type="entry name" value="EGF/Laminin"/>
    <property type="match status" value="1"/>
</dbReference>
<dbReference type="SUPFAM" id="SSF57440">
    <property type="entry name" value="Kringle-like"/>
    <property type="match status" value="2"/>
</dbReference>
<dbReference type="SUPFAM" id="SSF50494">
    <property type="entry name" value="Trypsin-like serine proteases"/>
    <property type="match status" value="1"/>
</dbReference>
<dbReference type="PROSITE" id="PS00022">
    <property type="entry name" value="EGF_1"/>
    <property type="match status" value="2"/>
</dbReference>
<dbReference type="PROSITE" id="PS50026">
    <property type="entry name" value="EGF_3"/>
    <property type="match status" value="2"/>
</dbReference>
<dbReference type="PROSITE" id="PS01253">
    <property type="entry name" value="FN1_1"/>
    <property type="match status" value="1"/>
</dbReference>
<dbReference type="PROSITE" id="PS51091">
    <property type="entry name" value="FN1_2"/>
    <property type="match status" value="1"/>
</dbReference>
<dbReference type="PROSITE" id="PS00023">
    <property type="entry name" value="FN2_1"/>
    <property type="match status" value="1"/>
</dbReference>
<dbReference type="PROSITE" id="PS51092">
    <property type="entry name" value="FN2_2"/>
    <property type="match status" value="1"/>
</dbReference>
<dbReference type="PROSITE" id="PS00021">
    <property type="entry name" value="KRINGLE_1"/>
    <property type="match status" value="1"/>
</dbReference>
<dbReference type="PROSITE" id="PS50070">
    <property type="entry name" value="KRINGLE_2"/>
    <property type="match status" value="1"/>
</dbReference>
<dbReference type="PROSITE" id="PS50240">
    <property type="entry name" value="TRYPSIN_DOM"/>
    <property type="match status" value="1"/>
</dbReference>
<dbReference type="PROSITE" id="PS00134">
    <property type="entry name" value="TRYPSIN_HIS"/>
    <property type="match status" value="1"/>
</dbReference>
<dbReference type="PROSITE" id="PS00135">
    <property type="entry name" value="TRYPSIN_SER"/>
    <property type="match status" value="1"/>
</dbReference>
<accession>Q6QNF4</accession>
<organism>
    <name type="scientific">Canis lupus familiaris</name>
    <name type="common">Dog</name>
    <name type="synonym">Canis familiaris</name>
    <dbReference type="NCBI Taxonomy" id="9615"/>
    <lineage>
        <taxon>Eukaryota</taxon>
        <taxon>Metazoa</taxon>
        <taxon>Chordata</taxon>
        <taxon>Craniata</taxon>
        <taxon>Vertebrata</taxon>
        <taxon>Euteleostomi</taxon>
        <taxon>Mammalia</taxon>
        <taxon>Eutheria</taxon>
        <taxon>Laurasiatheria</taxon>
        <taxon>Carnivora</taxon>
        <taxon>Caniformia</taxon>
        <taxon>Canidae</taxon>
        <taxon>Canis</taxon>
    </lineage>
</organism>
<gene>
    <name type="primary">HGFAC</name>
</gene>
<keyword id="KW-1015">Disulfide bond</keyword>
<keyword id="KW-0245">EGF-like domain</keyword>
<keyword id="KW-0325">Glycoprotein</keyword>
<keyword id="KW-0378">Hydrolase</keyword>
<keyword id="KW-0420">Kringle</keyword>
<keyword id="KW-0645">Protease</keyword>
<keyword id="KW-1185">Reference proteome</keyword>
<keyword id="KW-0677">Repeat</keyword>
<keyword id="KW-0964">Secreted</keyword>
<keyword id="KW-0720">Serine protease</keyword>
<keyword id="KW-0732">Signal</keyword>
<keyword id="KW-0865">Zymogen</keyword>